<protein>
    <recommendedName>
        <fullName evidence="1">Pantothenate synthetase</fullName>
        <shortName evidence="1">PS</shortName>
        <ecNumber evidence="1">6.3.2.1</ecNumber>
    </recommendedName>
    <alternativeName>
        <fullName evidence="1">Pantoate--beta-alanine ligase</fullName>
    </alternativeName>
    <alternativeName>
        <fullName evidence="1">Pantoate-activating enzyme</fullName>
    </alternativeName>
</protein>
<dbReference type="EC" id="6.3.2.1" evidence="1"/>
<dbReference type="EMBL" id="CP001615">
    <property type="protein sequence ID" value="ACQ71930.1"/>
    <property type="molecule type" value="Genomic_DNA"/>
</dbReference>
<dbReference type="RefSeq" id="WP_015881489.1">
    <property type="nucleotide sequence ID" value="NC_012673.1"/>
</dbReference>
<dbReference type="SMR" id="C4L6Q1"/>
<dbReference type="STRING" id="360911.EAT1b_3016"/>
<dbReference type="KEGG" id="eat:EAT1b_3016"/>
<dbReference type="eggNOG" id="COG0414">
    <property type="taxonomic scope" value="Bacteria"/>
</dbReference>
<dbReference type="HOGENOM" id="CLU_047148_0_0_9"/>
<dbReference type="OrthoDB" id="9773087at2"/>
<dbReference type="UniPathway" id="UPA00028">
    <property type="reaction ID" value="UER00005"/>
</dbReference>
<dbReference type="Proteomes" id="UP000000716">
    <property type="component" value="Chromosome"/>
</dbReference>
<dbReference type="GO" id="GO:0005829">
    <property type="term" value="C:cytosol"/>
    <property type="evidence" value="ECO:0007669"/>
    <property type="project" value="TreeGrafter"/>
</dbReference>
<dbReference type="GO" id="GO:0005524">
    <property type="term" value="F:ATP binding"/>
    <property type="evidence" value="ECO:0007669"/>
    <property type="project" value="UniProtKB-KW"/>
</dbReference>
<dbReference type="GO" id="GO:0004592">
    <property type="term" value="F:pantoate-beta-alanine ligase activity"/>
    <property type="evidence" value="ECO:0007669"/>
    <property type="project" value="UniProtKB-UniRule"/>
</dbReference>
<dbReference type="GO" id="GO:0015940">
    <property type="term" value="P:pantothenate biosynthetic process"/>
    <property type="evidence" value="ECO:0007669"/>
    <property type="project" value="UniProtKB-UniRule"/>
</dbReference>
<dbReference type="CDD" id="cd00560">
    <property type="entry name" value="PanC"/>
    <property type="match status" value="1"/>
</dbReference>
<dbReference type="FunFam" id="3.40.50.620:FF:000013">
    <property type="entry name" value="Pantothenate synthetase"/>
    <property type="match status" value="1"/>
</dbReference>
<dbReference type="Gene3D" id="3.40.50.620">
    <property type="entry name" value="HUPs"/>
    <property type="match status" value="1"/>
</dbReference>
<dbReference type="Gene3D" id="3.30.1300.10">
    <property type="entry name" value="Pantoate-beta-alanine ligase, C-terminal domain"/>
    <property type="match status" value="1"/>
</dbReference>
<dbReference type="HAMAP" id="MF_00158">
    <property type="entry name" value="PanC"/>
    <property type="match status" value="1"/>
</dbReference>
<dbReference type="InterPro" id="IPR004821">
    <property type="entry name" value="Cyt_trans-like"/>
</dbReference>
<dbReference type="InterPro" id="IPR003721">
    <property type="entry name" value="Pantoate_ligase"/>
</dbReference>
<dbReference type="InterPro" id="IPR042176">
    <property type="entry name" value="Pantoate_ligase_C"/>
</dbReference>
<dbReference type="InterPro" id="IPR014729">
    <property type="entry name" value="Rossmann-like_a/b/a_fold"/>
</dbReference>
<dbReference type="NCBIfam" id="TIGR00125">
    <property type="entry name" value="cyt_tran_rel"/>
    <property type="match status" value="1"/>
</dbReference>
<dbReference type="NCBIfam" id="TIGR00018">
    <property type="entry name" value="panC"/>
    <property type="match status" value="1"/>
</dbReference>
<dbReference type="PANTHER" id="PTHR21299">
    <property type="entry name" value="CYTIDYLATE KINASE/PANTOATE-BETA-ALANINE LIGASE"/>
    <property type="match status" value="1"/>
</dbReference>
<dbReference type="PANTHER" id="PTHR21299:SF1">
    <property type="entry name" value="PANTOATE--BETA-ALANINE LIGASE"/>
    <property type="match status" value="1"/>
</dbReference>
<dbReference type="Pfam" id="PF02569">
    <property type="entry name" value="Pantoate_ligase"/>
    <property type="match status" value="1"/>
</dbReference>
<dbReference type="SUPFAM" id="SSF52374">
    <property type="entry name" value="Nucleotidylyl transferase"/>
    <property type="match status" value="1"/>
</dbReference>
<accession>C4L6Q1</accession>
<name>PANC_EXISA</name>
<sequence length="276" mass="31205">MRIVSTVEELRSALPMDQTIGFVPTMGYLHEGHMSLVENARRENDVVVMSIFVNPTQFGPNEDLDRYPRDFERDEKLAREAGVDVLFYPTTETMYPLDMARVTVRHGADVLCGASRPGHFDGVLTIVSKLFNLVQPTRAYFGLKDAQQVALIEGYVRDYFVPVEIRRCPIIREETGLAKSSRNVYLSDIETVEASRIFSALTMAREALDAGQQVDEVKRQLIERLDEIPNSQIDYVELVDYPTLGAVSSDSTELLLAVAIQFERARLIDNVIWKKG</sequence>
<gene>
    <name evidence="1" type="primary">panC</name>
    <name type="ordered locus">EAT1b_3016</name>
</gene>
<keyword id="KW-0067">ATP-binding</keyword>
<keyword id="KW-0963">Cytoplasm</keyword>
<keyword id="KW-0436">Ligase</keyword>
<keyword id="KW-0547">Nucleotide-binding</keyword>
<keyword id="KW-0566">Pantothenate biosynthesis</keyword>
<evidence type="ECO:0000255" key="1">
    <source>
        <dbReference type="HAMAP-Rule" id="MF_00158"/>
    </source>
</evidence>
<feature type="chain" id="PRO_1000203491" description="Pantothenate synthetase">
    <location>
        <begin position="1"/>
        <end position="276"/>
    </location>
</feature>
<feature type="active site" description="Proton donor" evidence="1">
    <location>
        <position position="33"/>
    </location>
</feature>
<feature type="binding site" evidence="1">
    <location>
        <begin position="26"/>
        <end position="33"/>
    </location>
    <ligand>
        <name>ATP</name>
        <dbReference type="ChEBI" id="CHEBI:30616"/>
    </ligand>
</feature>
<feature type="binding site" evidence="1">
    <location>
        <position position="57"/>
    </location>
    <ligand>
        <name>(R)-pantoate</name>
        <dbReference type="ChEBI" id="CHEBI:15980"/>
    </ligand>
</feature>
<feature type="binding site" evidence="1">
    <location>
        <position position="57"/>
    </location>
    <ligand>
        <name>beta-alanine</name>
        <dbReference type="ChEBI" id="CHEBI:57966"/>
    </ligand>
</feature>
<feature type="binding site" evidence="1">
    <location>
        <begin position="142"/>
        <end position="145"/>
    </location>
    <ligand>
        <name>ATP</name>
        <dbReference type="ChEBI" id="CHEBI:30616"/>
    </ligand>
</feature>
<feature type="binding site" evidence="1">
    <location>
        <position position="148"/>
    </location>
    <ligand>
        <name>(R)-pantoate</name>
        <dbReference type="ChEBI" id="CHEBI:15980"/>
    </ligand>
</feature>
<feature type="binding site" evidence="1">
    <location>
        <position position="171"/>
    </location>
    <ligand>
        <name>ATP</name>
        <dbReference type="ChEBI" id="CHEBI:30616"/>
    </ligand>
</feature>
<feature type="binding site" evidence="1">
    <location>
        <begin position="179"/>
        <end position="182"/>
    </location>
    <ligand>
        <name>ATP</name>
        <dbReference type="ChEBI" id="CHEBI:30616"/>
    </ligand>
</feature>
<proteinExistence type="inferred from homology"/>
<reference key="1">
    <citation type="journal article" date="2011" name="J. Bacteriol.">
        <title>Complete genome sequence of the Thermophilic Bacterium Exiguobacterium sp. AT1b.</title>
        <authorList>
            <person name="Vishnivetskaya T.A."/>
            <person name="Lucas S."/>
            <person name="Copeland A."/>
            <person name="Lapidus A."/>
            <person name="Glavina del Rio T."/>
            <person name="Dalin E."/>
            <person name="Tice H."/>
            <person name="Bruce D.C."/>
            <person name="Goodwin L.A."/>
            <person name="Pitluck S."/>
            <person name="Saunders E."/>
            <person name="Brettin T."/>
            <person name="Detter C."/>
            <person name="Han C."/>
            <person name="Larimer F."/>
            <person name="Land M.L."/>
            <person name="Hauser L.J."/>
            <person name="Kyrpides N.C."/>
            <person name="Ovchinnikova G."/>
            <person name="Kathariou S."/>
            <person name="Ramaley R.F."/>
            <person name="Rodrigues D.F."/>
            <person name="Hendrix C."/>
            <person name="Richardson P."/>
            <person name="Tiedje J.M."/>
        </authorList>
    </citation>
    <scope>NUCLEOTIDE SEQUENCE [LARGE SCALE GENOMIC DNA]</scope>
    <source>
        <strain>ATCC BAA-1283 / AT1b</strain>
    </source>
</reference>
<comment type="function">
    <text evidence="1">Catalyzes the condensation of pantoate with beta-alanine in an ATP-dependent reaction via a pantoyl-adenylate intermediate.</text>
</comment>
<comment type="catalytic activity">
    <reaction evidence="1">
        <text>(R)-pantoate + beta-alanine + ATP = (R)-pantothenate + AMP + diphosphate + H(+)</text>
        <dbReference type="Rhea" id="RHEA:10912"/>
        <dbReference type="ChEBI" id="CHEBI:15378"/>
        <dbReference type="ChEBI" id="CHEBI:15980"/>
        <dbReference type="ChEBI" id="CHEBI:29032"/>
        <dbReference type="ChEBI" id="CHEBI:30616"/>
        <dbReference type="ChEBI" id="CHEBI:33019"/>
        <dbReference type="ChEBI" id="CHEBI:57966"/>
        <dbReference type="ChEBI" id="CHEBI:456215"/>
        <dbReference type="EC" id="6.3.2.1"/>
    </reaction>
</comment>
<comment type="pathway">
    <text evidence="1">Cofactor biosynthesis; (R)-pantothenate biosynthesis; (R)-pantothenate from (R)-pantoate and beta-alanine: step 1/1.</text>
</comment>
<comment type="subunit">
    <text evidence="1">Homodimer.</text>
</comment>
<comment type="subcellular location">
    <subcellularLocation>
        <location evidence="1">Cytoplasm</location>
    </subcellularLocation>
</comment>
<comment type="miscellaneous">
    <text evidence="1">The reaction proceeds by a bi uni uni bi ping pong mechanism.</text>
</comment>
<comment type="similarity">
    <text evidence="1">Belongs to the pantothenate synthetase family.</text>
</comment>
<organism>
    <name type="scientific">Exiguobacterium sp. (strain ATCC BAA-1283 / AT1b)</name>
    <dbReference type="NCBI Taxonomy" id="360911"/>
    <lineage>
        <taxon>Bacteria</taxon>
        <taxon>Bacillati</taxon>
        <taxon>Bacillota</taxon>
        <taxon>Bacilli</taxon>
        <taxon>Bacillales</taxon>
        <taxon>Bacillales Family XII. Incertae Sedis</taxon>
        <taxon>Exiguobacterium</taxon>
    </lineage>
</organism>